<protein>
    <recommendedName>
        <fullName>UPF0758 protein CJA_3522</fullName>
    </recommendedName>
</protein>
<accession>B3PG68</accession>
<reference key="1">
    <citation type="journal article" date="2008" name="J. Bacteriol.">
        <title>Insights into plant cell wall degradation from the genome sequence of the soil bacterium Cellvibrio japonicus.</title>
        <authorList>
            <person name="DeBoy R.T."/>
            <person name="Mongodin E.F."/>
            <person name="Fouts D.E."/>
            <person name="Tailford L.E."/>
            <person name="Khouri H."/>
            <person name="Emerson J.B."/>
            <person name="Mohamoud Y."/>
            <person name="Watkins K."/>
            <person name="Henrissat B."/>
            <person name="Gilbert H.J."/>
            <person name="Nelson K.E."/>
        </authorList>
    </citation>
    <scope>NUCLEOTIDE SEQUENCE [LARGE SCALE GENOMIC DNA]</scope>
    <source>
        <strain>Ueda107</strain>
    </source>
</reference>
<sequence>MSISKWPASERPREKLLSMGAPALSDAELLAIFLRIGCVGKSAVDVARELLQQFGGLRPLLEASQKEFCRGRGLGMVKYVQLQAVLEMARRHIHADMKVGDLLSSPHLVRDYLRAQLRHHAREVFAVLFLDNQNRLIAYEELFQGTIDGANVYPREVVKQALAHNAAAVIFAHNHPSGLAEPSQADIRITRRLQEALGLVDIRVLDHLVVGDGELVSLAERGWL</sequence>
<evidence type="ECO:0000255" key="1">
    <source>
        <dbReference type="PROSITE-ProRule" id="PRU01182"/>
    </source>
</evidence>
<evidence type="ECO:0000305" key="2"/>
<name>Y3522_CELJU</name>
<proteinExistence type="inferred from homology"/>
<organism>
    <name type="scientific">Cellvibrio japonicus (strain Ueda107)</name>
    <name type="common">Pseudomonas fluorescens subsp. cellulosa</name>
    <dbReference type="NCBI Taxonomy" id="498211"/>
    <lineage>
        <taxon>Bacteria</taxon>
        <taxon>Pseudomonadati</taxon>
        <taxon>Pseudomonadota</taxon>
        <taxon>Gammaproteobacteria</taxon>
        <taxon>Cellvibrionales</taxon>
        <taxon>Cellvibrionaceae</taxon>
        <taxon>Cellvibrio</taxon>
    </lineage>
</organism>
<feature type="chain" id="PRO_1000089799" description="UPF0758 protein CJA_3522">
    <location>
        <begin position="1"/>
        <end position="224"/>
    </location>
</feature>
<feature type="domain" description="MPN" evidence="1">
    <location>
        <begin position="102"/>
        <end position="224"/>
    </location>
</feature>
<feature type="short sequence motif" description="JAMM motif" evidence="1">
    <location>
        <begin position="173"/>
        <end position="186"/>
    </location>
</feature>
<feature type="binding site" evidence="1">
    <location>
        <position position="173"/>
    </location>
    <ligand>
        <name>Zn(2+)</name>
        <dbReference type="ChEBI" id="CHEBI:29105"/>
        <note>catalytic</note>
    </ligand>
</feature>
<feature type="binding site" evidence="1">
    <location>
        <position position="175"/>
    </location>
    <ligand>
        <name>Zn(2+)</name>
        <dbReference type="ChEBI" id="CHEBI:29105"/>
        <note>catalytic</note>
    </ligand>
</feature>
<feature type="binding site" evidence="1">
    <location>
        <position position="186"/>
    </location>
    <ligand>
        <name>Zn(2+)</name>
        <dbReference type="ChEBI" id="CHEBI:29105"/>
        <note>catalytic</note>
    </ligand>
</feature>
<keyword id="KW-0378">Hydrolase</keyword>
<keyword id="KW-0479">Metal-binding</keyword>
<keyword id="KW-0482">Metalloprotease</keyword>
<keyword id="KW-0645">Protease</keyword>
<keyword id="KW-1185">Reference proteome</keyword>
<keyword id="KW-0862">Zinc</keyword>
<gene>
    <name type="ordered locus">CJA_3522</name>
</gene>
<dbReference type="EMBL" id="CP000934">
    <property type="protein sequence ID" value="ACE84219.1"/>
    <property type="molecule type" value="Genomic_DNA"/>
</dbReference>
<dbReference type="RefSeq" id="WP_012489097.1">
    <property type="nucleotide sequence ID" value="NC_010995.1"/>
</dbReference>
<dbReference type="SMR" id="B3PG68"/>
<dbReference type="STRING" id="498211.CJA_3522"/>
<dbReference type="KEGG" id="cja:CJA_3522"/>
<dbReference type="eggNOG" id="COG2003">
    <property type="taxonomic scope" value="Bacteria"/>
</dbReference>
<dbReference type="HOGENOM" id="CLU_073529_0_1_6"/>
<dbReference type="OrthoDB" id="9804482at2"/>
<dbReference type="Proteomes" id="UP000001036">
    <property type="component" value="Chromosome"/>
</dbReference>
<dbReference type="GO" id="GO:0046872">
    <property type="term" value="F:metal ion binding"/>
    <property type="evidence" value="ECO:0007669"/>
    <property type="project" value="UniProtKB-KW"/>
</dbReference>
<dbReference type="GO" id="GO:0008237">
    <property type="term" value="F:metallopeptidase activity"/>
    <property type="evidence" value="ECO:0007669"/>
    <property type="project" value="UniProtKB-KW"/>
</dbReference>
<dbReference type="GO" id="GO:0006508">
    <property type="term" value="P:proteolysis"/>
    <property type="evidence" value="ECO:0007669"/>
    <property type="project" value="UniProtKB-KW"/>
</dbReference>
<dbReference type="CDD" id="cd08071">
    <property type="entry name" value="MPN_DUF2466"/>
    <property type="match status" value="1"/>
</dbReference>
<dbReference type="FunFam" id="3.40.140.10:FF:000032">
    <property type="entry name" value="DNA repair protein RadC"/>
    <property type="match status" value="1"/>
</dbReference>
<dbReference type="Gene3D" id="3.40.140.10">
    <property type="entry name" value="Cytidine Deaminase, domain 2"/>
    <property type="match status" value="1"/>
</dbReference>
<dbReference type="InterPro" id="IPR037518">
    <property type="entry name" value="MPN"/>
</dbReference>
<dbReference type="InterPro" id="IPR025657">
    <property type="entry name" value="RadC_JAB"/>
</dbReference>
<dbReference type="InterPro" id="IPR010994">
    <property type="entry name" value="RuvA_2-like"/>
</dbReference>
<dbReference type="InterPro" id="IPR001405">
    <property type="entry name" value="UPF0758"/>
</dbReference>
<dbReference type="InterPro" id="IPR020891">
    <property type="entry name" value="UPF0758_CS"/>
</dbReference>
<dbReference type="InterPro" id="IPR046778">
    <property type="entry name" value="UPF0758_N"/>
</dbReference>
<dbReference type="NCBIfam" id="NF000642">
    <property type="entry name" value="PRK00024.1"/>
    <property type="match status" value="1"/>
</dbReference>
<dbReference type="NCBIfam" id="TIGR00608">
    <property type="entry name" value="radc"/>
    <property type="match status" value="1"/>
</dbReference>
<dbReference type="PANTHER" id="PTHR30471">
    <property type="entry name" value="DNA REPAIR PROTEIN RADC"/>
    <property type="match status" value="1"/>
</dbReference>
<dbReference type="PANTHER" id="PTHR30471:SF3">
    <property type="entry name" value="UPF0758 PROTEIN YEES-RELATED"/>
    <property type="match status" value="1"/>
</dbReference>
<dbReference type="Pfam" id="PF04002">
    <property type="entry name" value="RadC"/>
    <property type="match status" value="1"/>
</dbReference>
<dbReference type="Pfam" id="PF20582">
    <property type="entry name" value="UPF0758_N"/>
    <property type="match status" value="1"/>
</dbReference>
<dbReference type="SUPFAM" id="SSF102712">
    <property type="entry name" value="JAB1/MPN domain"/>
    <property type="match status" value="1"/>
</dbReference>
<dbReference type="SUPFAM" id="SSF47781">
    <property type="entry name" value="RuvA domain 2-like"/>
    <property type="match status" value="1"/>
</dbReference>
<dbReference type="PROSITE" id="PS50249">
    <property type="entry name" value="MPN"/>
    <property type="match status" value="1"/>
</dbReference>
<dbReference type="PROSITE" id="PS01302">
    <property type="entry name" value="UPF0758"/>
    <property type="match status" value="1"/>
</dbReference>
<comment type="similarity">
    <text evidence="2">Belongs to the UPF0758 family.</text>
</comment>